<proteinExistence type="inferred from homology"/>
<organism>
    <name type="scientific">Thermoanaerobacter pseudethanolicus (strain ATCC 33223 / 39E)</name>
    <name type="common">Clostridium thermohydrosulfuricum</name>
    <dbReference type="NCBI Taxonomy" id="340099"/>
    <lineage>
        <taxon>Bacteria</taxon>
        <taxon>Bacillati</taxon>
        <taxon>Bacillota</taxon>
        <taxon>Clostridia</taxon>
        <taxon>Thermoanaerobacterales</taxon>
        <taxon>Thermoanaerobacteraceae</taxon>
        <taxon>Thermoanaerobacter</taxon>
    </lineage>
</organism>
<keyword id="KW-0378">Hydrolase</keyword>
<keyword id="KW-0479">Metal-binding</keyword>
<keyword id="KW-1185">Reference proteome</keyword>
<keyword id="KW-0862">Zinc</keyword>
<sequence>MNLLIKNVALLSMKEEQPLMENTNIYIEGDTITYIGEINPDIKVDRVIDGTKKIATPGLINAHTHLGMSLLRNYADDVPLFDWLSKHIWPVESKLSAEDVYWGSLLSMIEMIYSGTTTFCDMYFFMDEVAKATEEVGIRGVLTRGIIEESDAEINKEKLRDTRKLYNTWHNKADGRIKVMVGPHAPYTCSSSYLKEVVELAKELNTGIHIHVSETKKEVEESFQKHGKSPVKHLKDIGVFDVPTVAAHCVHVSDEDTEILKEMKVSPVYNPTSNAKLASGFAPVDQMLKKGINVALGTDGPASNNNLNMFEEIHFAATINKALNYDALAVPALEALKMATINGAKALLWDKEIGSIEVGKKADIVIIDIDKPHFYPHHNLISALAYTAQASDVDTVIINGKIIMENREIKTVDVEKVMYNVEKRAKNLIQR</sequence>
<dbReference type="EC" id="3.5.4.28" evidence="1"/>
<dbReference type="EC" id="3.5.4.31" evidence="1"/>
<dbReference type="EMBL" id="CP000924">
    <property type="protein sequence ID" value="ABY94531.1"/>
    <property type="molecule type" value="Genomic_DNA"/>
</dbReference>
<dbReference type="RefSeq" id="WP_009052490.1">
    <property type="nucleotide sequence ID" value="NC_010321.1"/>
</dbReference>
<dbReference type="SMR" id="B0K8R8"/>
<dbReference type="STRING" id="340099.Teth39_0875"/>
<dbReference type="KEGG" id="tpd:Teth39_0875"/>
<dbReference type="eggNOG" id="COG0402">
    <property type="taxonomic scope" value="Bacteria"/>
</dbReference>
<dbReference type="HOGENOM" id="CLU_012358_2_1_9"/>
<dbReference type="Proteomes" id="UP000002156">
    <property type="component" value="Chromosome"/>
</dbReference>
<dbReference type="GO" id="GO:0090614">
    <property type="term" value="F:5'-methylthioadenosine deaminase activity"/>
    <property type="evidence" value="ECO:0007669"/>
    <property type="project" value="UniProtKB-UniRule"/>
</dbReference>
<dbReference type="GO" id="GO:0046872">
    <property type="term" value="F:metal ion binding"/>
    <property type="evidence" value="ECO:0007669"/>
    <property type="project" value="UniProtKB-KW"/>
</dbReference>
<dbReference type="GO" id="GO:0050270">
    <property type="term" value="F:S-adenosylhomocysteine deaminase activity"/>
    <property type="evidence" value="ECO:0007669"/>
    <property type="project" value="UniProtKB-UniRule"/>
</dbReference>
<dbReference type="CDD" id="cd01298">
    <property type="entry name" value="ATZ_TRZ_like"/>
    <property type="match status" value="1"/>
</dbReference>
<dbReference type="FunFam" id="3.20.20.140:FF:000014">
    <property type="entry name" value="5-methylthioadenosine/S-adenosylhomocysteine deaminase"/>
    <property type="match status" value="1"/>
</dbReference>
<dbReference type="Gene3D" id="3.20.20.140">
    <property type="entry name" value="Metal-dependent hydrolases"/>
    <property type="match status" value="1"/>
</dbReference>
<dbReference type="Gene3D" id="2.30.40.10">
    <property type="entry name" value="Urease, subunit C, domain 1"/>
    <property type="match status" value="1"/>
</dbReference>
<dbReference type="HAMAP" id="MF_01281">
    <property type="entry name" value="MTA_SAH_deamin"/>
    <property type="match status" value="1"/>
</dbReference>
<dbReference type="InterPro" id="IPR006680">
    <property type="entry name" value="Amidohydro-rel"/>
</dbReference>
<dbReference type="InterPro" id="IPR023512">
    <property type="entry name" value="Deaminase_MtaD/DadD"/>
</dbReference>
<dbReference type="InterPro" id="IPR011059">
    <property type="entry name" value="Metal-dep_hydrolase_composite"/>
</dbReference>
<dbReference type="InterPro" id="IPR032466">
    <property type="entry name" value="Metal_Hydrolase"/>
</dbReference>
<dbReference type="InterPro" id="IPR050287">
    <property type="entry name" value="MTA/SAH_deaminase"/>
</dbReference>
<dbReference type="PANTHER" id="PTHR43794:SF11">
    <property type="entry name" value="AMIDOHYDROLASE-RELATED DOMAIN-CONTAINING PROTEIN"/>
    <property type="match status" value="1"/>
</dbReference>
<dbReference type="PANTHER" id="PTHR43794">
    <property type="entry name" value="AMINOHYDROLASE SSNA-RELATED"/>
    <property type="match status" value="1"/>
</dbReference>
<dbReference type="Pfam" id="PF01979">
    <property type="entry name" value="Amidohydro_1"/>
    <property type="match status" value="1"/>
</dbReference>
<dbReference type="SUPFAM" id="SSF51338">
    <property type="entry name" value="Composite domain of metallo-dependent hydrolases"/>
    <property type="match status" value="1"/>
</dbReference>
<dbReference type="SUPFAM" id="SSF51556">
    <property type="entry name" value="Metallo-dependent hydrolases"/>
    <property type="match status" value="1"/>
</dbReference>
<feature type="chain" id="PRO_1000140354" description="5-methylthioadenosine/S-adenosylhomocysteine deaminase">
    <location>
        <begin position="1"/>
        <end position="431"/>
    </location>
</feature>
<feature type="binding site" evidence="1">
    <location>
        <position position="63"/>
    </location>
    <ligand>
        <name>Zn(2+)</name>
        <dbReference type="ChEBI" id="CHEBI:29105"/>
    </ligand>
</feature>
<feature type="binding site" evidence="1">
    <location>
        <position position="65"/>
    </location>
    <ligand>
        <name>Zn(2+)</name>
        <dbReference type="ChEBI" id="CHEBI:29105"/>
    </ligand>
</feature>
<feature type="binding site" evidence="1">
    <location>
        <position position="92"/>
    </location>
    <ligand>
        <name>substrate</name>
    </ligand>
</feature>
<feature type="binding site" evidence="1">
    <location>
        <position position="144"/>
    </location>
    <ligand>
        <name>substrate</name>
    </ligand>
</feature>
<feature type="binding site" evidence="1">
    <location>
        <position position="184"/>
    </location>
    <ligand>
        <name>substrate</name>
    </ligand>
</feature>
<feature type="binding site" evidence="1">
    <location>
        <position position="211"/>
    </location>
    <ligand>
        <name>Zn(2+)</name>
        <dbReference type="ChEBI" id="CHEBI:29105"/>
    </ligand>
</feature>
<feature type="binding site" evidence="1">
    <location>
        <position position="214"/>
    </location>
    <ligand>
        <name>substrate</name>
    </ligand>
</feature>
<feature type="binding site" evidence="1">
    <location>
        <position position="299"/>
    </location>
    <ligand>
        <name>substrate</name>
    </ligand>
</feature>
<feature type="binding site" evidence="1">
    <location>
        <position position="299"/>
    </location>
    <ligand>
        <name>Zn(2+)</name>
        <dbReference type="ChEBI" id="CHEBI:29105"/>
    </ligand>
</feature>
<gene>
    <name evidence="1" type="primary">mtaD</name>
    <name type="ordered locus">Teth39_0875</name>
</gene>
<evidence type="ECO:0000255" key="1">
    <source>
        <dbReference type="HAMAP-Rule" id="MF_01281"/>
    </source>
</evidence>
<name>MTAD_THEP3</name>
<comment type="function">
    <text evidence="1">Catalyzes the deamination of 5-methylthioadenosine and S-adenosyl-L-homocysteine into 5-methylthioinosine and S-inosyl-L-homocysteine, respectively. Is also able to deaminate adenosine.</text>
</comment>
<comment type="catalytic activity">
    <reaction evidence="1">
        <text>S-adenosyl-L-homocysteine + H2O + H(+) = S-inosyl-L-homocysteine + NH4(+)</text>
        <dbReference type="Rhea" id="RHEA:20716"/>
        <dbReference type="ChEBI" id="CHEBI:15377"/>
        <dbReference type="ChEBI" id="CHEBI:15378"/>
        <dbReference type="ChEBI" id="CHEBI:28938"/>
        <dbReference type="ChEBI" id="CHEBI:57856"/>
        <dbReference type="ChEBI" id="CHEBI:57985"/>
        <dbReference type="EC" id="3.5.4.28"/>
    </reaction>
</comment>
<comment type="catalytic activity">
    <reaction evidence="1">
        <text>S-methyl-5'-thioadenosine + H2O + H(+) = S-methyl-5'-thioinosine + NH4(+)</text>
        <dbReference type="Rhea" id="RHEA:25025"/>
        <dbReference type="ChEBI" id="CHEBI:15377"/>
        <dbReference type="ChEBI" id="CHEBI:15378"/>
        <dbReference type="ChEBI" id="CHEBI:17509"/>
        <dbReference type="ChEBI" id="CHEBI:28938"/>
        <dbReference type="ChEBI" id="CHEBI:48595"/>
        <dbReference type="EC" id="3.5.4.31"/>
    </reaction>
</comment>
<comment type="cofactor">
    <cofactor evidence="1">
        <name>Zn(2+)</name>
        <dbReference type="ChEBI" id="CHEBI:29105"/>
    </cofactor>
    <text evidence="1">Binds 1 zinc ion per subunit.</text>
</comment>
<comment type="similarity">
    <text evidence="1">Belongs to the metallo-dependent hydrolases superfamily. MTA/SAH deaminase family.</text>
</comment>
<protein>
    <recommendedName>
        <fullName evidence="1">5-methylthioadenosine/S-adenosylhomocysteine deaminase</fullName>
        <shortName evidence="1">MTA/SAH deaminase</shortName>
        <ecNumber evidence="1">3.5.4.28</ecNumber>
        <ecNumber evidence="1">3.5.4.31</ecNumber>
    </recommendedName>
</protein>
<reference key="1">
    <citation type="submission" date="2008-01" db="EMBL/GenBank/DDBJ databases">
        <title>Complete sequence of Thermoanaerobacter pseudethanolicus 39E.</title>
        <authorList>
            <person name="Copeland A."/>
            <person name="Lucas S."/>
            <person name="Lapidus A."/>
            <person name="Barry K."/>
            <person name="Glavina del Rio T."/>
            <person name="Dalin E."/>
            <person name="Tice H."/>
            <person name="Pitluck S."/>
            <person name="Bruce D."/>
            <person name="Goodwin L."/>
            <person name="Saunders E."/>
            <person name="Brettin T."/>
            <person name="Detter J.C."/>
            <person name="Han C."/>
            <person name="Schmutz J."/>
            <person name="Larimer F."/>
            <person name="Land M."/>
            <person name="Hauser L."/>
            <person name="Kyrpides N."/>
            <person name="Lykidis A."/>
            <person name="Hemme C."/>
            <person name="Fields M.W."/>
            <person name="He Z."/>
            <person name="Zhou J."/>
            <person name="Richardson P."/>
        </authorList>
    </citation>
    <scope>NUCLEOTIDE SEQUENCE [LARGE SCALE GENOMIC DNA]</scope>
    <source>
        <strain>ATCC 33223 / DSM 2355 / 39E</strain>
    </source>
</reference>
<accession>B0K8R8</accession>